<keyword id="KW-0496">Mitochondrion</keyword>
<keyword id="KW-0687">Ribonucleoprotein</keyword>
<keyword id="KW-0689">Ribosomal protein</keyword>
<keyword id="KW-0694">RNA-binding</keyword>
<keyword id="KW-0699">rRNA-binding</keyword>
<dbReference type="EMBL" id="DQ336395">
    <property type="protein sequence ID" value="ABC60375.1"/>
    <property type="molecule type" value="Genomic_DNA"/>
</dbReference>
<dbReference type="RefSeq" id="YP_492624.1">
    <property type="nucleotide sequence ID" value="NC_007787.2"/>
</dbReference>
<dbReference type="SMR" id="Q2LCR8"/>
<dbReference type="GeneID" id="3912606"/>
<dbReference type="GO" id="GO:0005739">
    <property type="term" value="C:mitochondrion"/>
    <property type="evidence" value="ECO:0007669"/>
    <property type="project" value="UniProtKB-SubCell"/>
</dbReference>
<dbReference type="GO" id="GO:1990904">
    <property type="term" value="C:ribonucleoprotein complex"/>
    <property type="evidence" value="ECO:0007669"/>
    <property type="project" value="UniProtKB-KW"/>
</dbReference>
<dbReference type="GO" id="GO:0005840">
    <property type="term" value="C:ribosome"/>
    <property type="evidence" value="ECO:0007669"/>
    <property type="project" value="UniProtKB-KW"/>
</dbReference>
<dbReference type="GO" id="GO:0019843">
    <property type="term" value="F:rRNA binding"/>
    <property type="evidence" value="ECO:0007669"/>
    <property type="project" value="UniProtKB-KW"/>
</dbReference>
<dbReference type="GO" id="GO:0006412">
    <property type="term" value="P:translation"/>
    <property type="evidence" value="ECO:0007669"/>
    <property type="project" value="InterPro"/>
</dbReference>
<dbReference type="CDD" id="cd00323">
    <property type="entry name" value="uS7"/>
    <property type="match status" value="1"/>
</dbReference>
<dbReference type="Gene3D" id="1.10.455.10">
    <property type="entry name" value="Ribosomal protein S7 domain"/>
    <property type="match status" value="1"/>
</dbReference>
<dbReference type="InterPro" id="IPR000235">
    <property type="entry name" value="Ribosomal_uS7"/>
</dbReference>
<dbReference type="InterPro" id="IPR023798">
    <property type="entry name" value="Ribosomal_uS7_dom"/>
</dbReference>
<dbReference type="InterPro" id="IPR036823">
    <property type="entry name" value="Ribosomal_uS7_dom_sf"/>
</dbReference>
<dbReference type="Pfam" id="PF00177">
    <property type="entry name" value="Ribosomal_S7"/>
    <property type="match status" value="1"/>
</dbReference>
<dbReference type="PIRSF" id="PIRSF002122">
    <property type="entry name" value="RPS7p_RPS7a_RPS5e_RPS7o"/>
    <property type="match status" value="1"/>
</dbReference>
<dbReference type="SUPFAM" id="SSF47973">
    <property type="entry name" value="Ribosomal protein S7"/>
    <property type="match status" value="1"/>
</dbReference>
<evidence type="ECO:0000250" key="1"/>
<evidence type="ECO:0000305" key="2"/>
<proteinExistence type="inferred from homology"/>
<organism>
    <name type="scientific">Dictyostelium citrinum</name>
    <name type="common">Slime mold</name>
    <dbReference type="NCBI Taxonomy" id="361072"/>
    <lineage>
        <taxon>Eukaryota</taxon>
        <taxon>Amoebozoa</taxon>
        <taxon>Evosea</taxon>
        <taxon>Eumycetozoa</taxon>
        <taxon>Dictyostelia</taxon>
        <taxon>Dictyosteliales</taxon>
        <taxon>Dictyosteliaceae</taxon>
        <taxon>Dictyostelium</taxon>
    </lineage>
</organism>
<protein>
    <recommendedName>
        <fullName evidence="2">Small ribosomal subunit protein uS7m</fullName>
    </recommendedName>
    <alternativeName>
        <fullName>Ribosomal protein S7, mitochondrial</fullName>
        <shortName>MRP-S7</shortName>
        <shortName>S7mt</shortName>
    </alternativeName>
</protein>
<geneLocation type="mitochondrion"/>
<sequence length="162" mass="19382">MVNTFDKTFEKRLINAFMRKGNYIKAERIYFTVLNRLTTLGIQNPYKFLRETLIKMTPIMGVVKKKRGVKEKIYPKYLEPRMGEKYAIKWLLKKLEKSKGDLLINNIVDEFLKASKDQGEVLKEKWALYKEVRYALSFNKAKKKKVSFIESKIKATKRRKWY</sequence>
<reference key="1">
    <citation type="journal article" date="2008" name="Mol. Biol. Evol.">
        <title>Mitochondrial genome evolution in the social amoebae.</title>
        <authorList>
            <person name="Heidel A.J."/>
            <person name="Gloeckner G."/>
        </authorList>
    </citation>
    <scope>NUCLEOTIDE SEQUENCE [LARGE SCALE GENOMIC DNA]</scope>
</reference>
<feature type="chain" id="PRO_0000312404" description="Small ribosomal subunit protein uS7m">
    <location>
        <begin position="1"/>
        <end position="162"/>
    </location>
</feature>
<gene>
    <name type="primary">mrps7</name>
    <name type="synonym">rps7</name>
</gene>
<comment type="function">
    <text evidence="1">One of the primary rRNA binding proteins, it binds directly to 16S-like rRNA where it nucleates assembly of the head domain of the small subunit.</text>
</comment>
<comment type="subunit">
    <text>Part of the small ribosomal subunit.</text>
</comment>
<comment type="subcellular location">
    <subcellularLocation>
        <location>Mitochondrion</location>
    </subcellularLocation>
</comment>
<comment type="similarity">
    <text evidence="2">Belongs to the universal ribosomal protein uS7 family.</text>
</comment>
<name>RT07_DICCI</name>
<accession>Q2LCR8</accession>